<reference key="1">
    <citation type="journal article" date="2007" name="PLoS ONE">
        <title>A glimpse of streptococcal toxic shock syndrome from comparative genomics of S. suis 2 Chinese isolates.</title>
        <authorList>
            <person name="Chen C."/>
            <person name="Tang J."/>
            <person name="Dong W."/>
            <person name="Wang C."/>
            <person name="Feng Y."/>
            <person name="Wang J."/>
            <person name="Zheng F."/>
            <person name="Pan X."/>
            <person name="Liu D."/>
            <person name="Li M."/>
            <person name="Song Y."/>
            <person name="Zhu X."/>
            <person name="Sun H."/>
            <person name="Feng T."/>
            <person name="Guo Z."/>
            <person name="Ju A."/>
            <person name="Ge J."/>
            <person name="Dong Y."/>
            <person name="Sun W."/>
            <person name="Jiang Y."/>
            <person name="Wang J."/>
            <person name="Yan J."/>
            <person name="Yang H."/>
            <person name="Wang X."/>
            <person name="Gao G.F."/>
            <person name="Yang R."/>
            <person name="Wang J."/>
            <person name="Yu J."/>
        </authorList>
    </citation>
    <scope>NUCLEOTIDE SEQUENCE [LARGE SCALE GENOMIC DNA]</scope>
    <source>
        <strain>98HAH33</strain>
    </source>
</reference>
<dbReference type="EMBL" id="CP000408">
    <property type="protein sequence ID" value="ABP91450.1"/>
    <property type="molecule type" value="Genomic_DNA"/>
</dbReference>
<dbReference type="SMR" id="A4VZB1"/>
<dbReference type="KEGG" id="ssv:SSU98_0292"/>
<dbReference type="HOGENOM" id="CLU_048704_0_0_9"/>
<dbReference type="BioCyc" id="SSUI391296:GI2E-324-MONOMER"/>
<dbReference type="CDD" id="cd08025">
    <property type="entry name" value="RNR_PFL_like_DUF711"/>
    <property type="match status" value="1"/>
</dbReference>
<dbReference type="Gene3D" id="3.20.70.20">
    <property type="match status" value="1"/>
</dbReference>
<dbReference type="HAMAP" id="MF_01221">
    <property type="entry name" value="UPF0210"/>
    <property type="match status" value="1"/>
</dbReference>
<dbReference type="InterPro" id="IPR007841">
    <property type="entry name" value="UPF0210"/>
</dbReference>
<dbReference type="NCBIfam" id="NF003700">
    <property type="entry name" value="PRK05313.1"/>
    <property type="match status" value="1"/>
</dbReference>
<dbReference type="PANTHER" id="PTHR37560:SF1">
    <property type="entry name" value="UPF0210 PROTEIN MJ1665"/>
    <property type="match status" value="1"/>
</dbReference>
<dbReference type="PANTHER" id="PTHR37560">
    <property type="entry name" value="UPF0210 PROTEIN SPR0218"/>
    <property type="match status" value="1"/>
</dbReference>
<dbReference type="Pfam" id="PF05167">
    <property type="entry name" value="DUF711"/>
    <property type="match status" value="1"/>
</dbReference>
<dbReference type="SUPFAM" id="SSF51998">
    <property type="entry name" value="PFL-like glycyl radical enzymes"/>
    <property type="match status" value="1"/>
</dbReference>
<sequence>MDIRQVRETIEMIEEQNFDIRTITMGISLLDCIDSDIDKAAEKVYTKIVTKAKNLVAVGDEIAAELGIPIVNKRVSVTPIALIGAATDATDYLPLAHALDKAAHEIGIDFIGGFSALAQKGYQKGDEILINSIPQALAQTSKVCSSVNIGSTKTGINMTAVRDMGRIIKETAEASDMGAAKLVVFANAVEDNPFMAGAFHGVGEADVVINVGVSGPGVVKRALEKVRGESFDVVAETVKKTAFKITRIGQLVGNMASERLGVKFGIVDLSLAPTPAVGDSVARVLEEMGLETVGTHGTTAALALLNDAVKKGGVMACNQVGGLSGAFIPVSEDEGMIAAVQNGSLNLEKLEAMTAICSVGLDMIAIPETTPAETIAAMIADEAAIGVINQKTTAVRIIPLGKEGDMIEFGGLLGTAPVMKVNQASSVDFINRGGQIPAPIHSFKN</sequence>
<gene>
    <name type="ordered locus">SSU98_0292</name>
</gene>
<protein>
    <recommendedName>
        <fullName evidence="1">UPF0210 protein SSU98_0292</fullName>
    </recommendedName>
</protein>
<feature type="chain" id="PRO_1000066776" description="UPF0210 protein SSU98_0292">
    <location>
        <begin position="1"/>
        <end position="445"/>
    </location>
</feature>
<proteinExistence type="inferred from homology"/>
<accession>A4VZB1</accession>
<name>Y292_STRS2</name>
<comment type="subunit">
    <text evidence="1">Homodimer.</text>
</comment>
<comment type="similarity">
    <text evidence="1">Belongs to the UPF0210 family.</text>
</comment>
<organism>
    <name type="scientific">Streptococcus suis (strain 98HAH33)</name>
    <dbReference type="NCBI Taxonomy" id="391296"/>
    <lineage>
        <taxon>Bacteria</taxon>
        <taxon>Bacillati</taxon>
        <taxon>Bacillota</taxon>
        <taxon>Bacilli</taxon>
        <taxon>Lactobacillales</taxon>
        <taxon>Streptococcaceae</taxon>
        <taxon>Streptococcus</taxon>
    </lineage>
</organism>
<evidence type="ECO:0000255" key="1">
    <source>
        <dbReference type="HAMAP-Rule" id="MF_01221"/>
    </source>
</evidence>